<accession>B8D7X6</accession>
<dbReference type="EC" id="2.7.7.18" evidence="1"/>
<dbReference type="EMBL" id="CP001158">
    <property type="protein sequence ID" value="ACL30241.1"/>
    <property type="molecule type" value="Genomic_DNA"/>
</dbReference>
<dbReference type="RefSeq" id="WP_012619552.1">
    <property type="nucleotide sequence ID" value="NC_011834.1"/>
</dbReference>
<dbReference type="SMR" id="B8D7X6"/>
<dbReference type="KEGG" id="bau:BUAPTUC7_440"/>
<dbReference type="HOGENOM" id="CLU_069765_0_0_6"/>
<dbReference type="UniPathway" id="UPA00253">
    <property type="reaction ID" value="UER00332"/>
</dbReference>
<dbReference type="GO" id="GO:0005524">
    <property type="term" value="F:ATP binding"/>
    <property type="evidence" value="ECO:0007669"/>
    <property type="project" value="UniProtKB-KW"/>
</dbReference>
<dbReference type="GO" id="GO:0004515">
    <property type="term" value="F:nicotinate-nucleotide adenylyltransferase activity"/>
    <property type="evidence" value="ECO:0007669"/>
    <property type="project" value="UniProtKB-UniRule"/>
</dbReference>
<dbReference type="GO" id="GO:0009435">
    <property type="term" value="P:NAD biosynthetic process"/>
    <property type="evidence" value="ECO:0007669"/>
    <property type="project" value="UniProtKB-UniRule"/>
</dbReference>
<dbReference type="CDD" id="cd02165">
    <property type="entry name" value="NMNAT"/>
    <property type="match status" value="1"/>
</dbReference>
<dbReference type="Gene3D" id="3.40.50.620">
    <property type="entry name" value="HUPs"/>
    <property type="match status" value="1"/>
</dbReference>
<dbReference type="HAMAP" id="MF_00244">
    <property type="entry name" value="NaMN_adenylyltr"/>
    <property type="match status" value="1"/>
</dbReference>
<dbReference type="InterPro" id="IPR004821">
    <property type="entry name" value="Cyt_trans-like"/>
</dbReference>
<dbReference type="InterPro" id="IPR005248">
    <property type="entry name" value="NadD/NMNAT"/>
</dbReference>
<dbReference type="InterPro" id="IPR014729">
    <property type="entry name" value="Rossmann-like_a/b/a_fold"/>
</dbReference>
<dbReference type="NCBIfam" id="TIGR00125">
    <property type="entry name" value="cyt_tran_rel"/>
    <property type="match status" value="1"/>
</dbReference>
<dbReference type="NCBIfam" id="TIGR00482">
    <property type="entry name" value="nicotinate (nicotinamide) nucleotide adenylyltransferase"/>
    <property type="match status" value="1"/>
</dbReference>
<dbReference type="NCBIfam" id="NF000839">
    <property type="entry name" value="PRK00071.1-1"/>
    <property type="match status" value="1"/>
</dbReference>
<dbReference type="PANTHER" id="PTHR39321">
    <property type="entry name" value="NICOTINATE-NUCLEOTIDE ADENYLYLTRANSFERASE-RELATED"/>
    <property type="match status" value="1"/>
</dbReference>
<dbReference type="PANTHER" id="PTHR39321:SF3">
    <property type="entry name" value="PHOSPHOPANTETHEINE ADENYLYLTRANSFERASE"/>
    <property type="match status" value="1"/>
</dbReference>
<dbReference type="Pfam" id="PF01467">
    <property type="entry name" value="CTP_transf_like"/>
    <property type="match status" value="1"/>
</dbReference>
<dbReference type="SUPFAM" id="SSF52374">
    <property type="entry name" value="Nucleotidylyl transferase"/>
    <property type="match status" value="1"/>
</dbReference>
<comment type="function">
    <text evidence="1">Catalyzes the reversible adenylation of nicotinate mononucleotide (NaMN) to nicotinic acid adenine dinucleotide (NaAD).</text>
</comment>
<comment type="catalytic activity">
    <reaction evidence="1">
        <text>nicotinate beta-D-ribonucleotide + ATP + H(+) = deamido-NAD(+) + diphosphate</text>
        <dbReference type="Rhea" id="RHEA:22860"/>
        <dbReference type="ChEBI" id="CHEBI:15378"/>
        <dbReference type="ChEBI" id="CHEBI:30616"/>
        <dbReference type="ChEBI" id="CHEBI:33019"/>
        <dbReference type="ChEBI" id="CHEBI:57502"/>
        <dbReference type="ChEBI" id="CHEBI:58437"/>
        <dbReference type="EC" id="2.7.7.18"/>
    </reaction>
</comment>
<comment type="pathway">
    <text evidence="1">Cofactor biosynthesis; NAD(+) biosynthesis; deamido-NAD(+) from nicotinate D-ribonucleotide: step 1/1.</text>
</comment>
<comment type="similarity">
    <text evidence="1">Belongs to the NadD family.</text>
</comment>
<name>NADD_BUCAT</name>
<evidence type="ECO:0000255" key="1">
    <source>
        <dbReference type="HAMAP-Rule" id="MF_00244"/>
    </source>
</evidence>
<reference key="1">
    <citation type="journal article" date="2009" name="Science">
        <title>The dynamics and time scale of ongoing genomic erosion in symbiotic bacteria.</title>
        <authorList>
            <person name="Moran N.A."/>
            <person name="McLaughlin H.J."/>
            <person name="Sorek R."/>
        </authorList>
    </citation>
    <scope>NUCLEOTIDE SEQUENCE [LARGE SCALE GENOMIC DNA]</scope>
    <source>
        <strain>Tuc7</strain>
    </source>
</reference>
<organism>
    <name type="scientific">Buchnera aphidicola subsp. Acyrthosiphon pisum (strain Tuc7)</name>
    <dbReference type="NCBI Taxonomy" id="561501"/>
    <lineage>
        <taxon>Bacteria</taxon>
        <taxon>Pseudomonadati</taxon>
        <taxon>Pseudomonadota</taxon>
        <taxon>Gammaproteobacteria</taxon>
        <taxon>Enterobacterales</taxon>
        <taxon>Erwiniaceae</taxon>
        <taxon>Buchnera</taxon>
    </lineage>
</organism>
<proteinExistence type="inferred from homology"/>
<keyword id="KW-0067">ATP-binding</keyword>
<keyword id="KW-0520">NAD</keyword>
<keyword id="KW-0547">Nucleotide-binding</keyword>
<keyword id="KW-0548">Nucleotidyltransferase</keyword>
<keyword id="KW-0662">Pyridine nucleotide biosynthesis</keyword>
<keyword id="KW-0808">Transferase</keyword>
<gene>
    <name evidence="1" type="primary">nadD</name>
    <name type="ordered locus">BUAPTUC7_440</name>
</gene>
<sequence>MKKLCAIFGGNFDPIHYGHINLAEKLAKDISIKKIILLPNNYPPHRKKTQTSISDKIKMIKLAIHNNPLFEISYLETKKNNIFYTIDTLKKIRKKISHLEPLCFIIGEDNLQTFYLWKNWREILLYSHLLIYPRKHKKQKNNELEKWIHSNTVYDCNLLHKQPCGLIFFSDAPCINISSSRIRKNYFYGKNSHSLLPSIVNNYILLKKLYYTNQ</sequence>
<protein>
    <recommendedName>
        <fullName evidence="1">Probable nicotinate-nucleotide adenylyltransferase</fullName>
        <ecNumber evidence="1">2.7.7.18</ecNumber>
    </recommendedName>
    <alternativeName>
        <fullName evidence="1">Deamido-NAD(+) diphosphorylase</fullName>
    </alternativeName>
    <alternativeName>
        <fullName evidence="1">Deamido-NAD(+) pyrophosphorylase</fullName>
    </alternativeName>
    <alternativeName>
        <fullName evidence="1">Nicotinate mononucleotide adenylyltransferase</fullName>
        <shortName evidence="1">NaMN adenylyltransferase</shortName>
    </alternativeName>
</protein>
<feature type="chain" id="PRO_1000125344" description="Probable nicotinate-nucleotide adenylyltransferase">
    <location>
        <begin position="1"/>
        <end position="214"/>
    </location>
</feature>